<reference key="1">
    <citation type="journal article" date="2009" name="Genome Biol.">
        <title>Genomic and genetic analyses of diversity and plant interactions of Pseudomonas fluorescens.</title>
        <authorList>
            <person name="Silby M.W."/>
            <person name="Cerdeno-Tarraga A.M."/>
            <person name="Vernikos G.S."/>
            <person name="Giddens S.R."/>
            <person name="Jackson R.W."/>
            <person name="Preston G.M."/>
            <person name="Zhang X.-X."/>
            <person name="Moon C.D."/>
            <person name="Gehrig S.M."/>
            <person name="Godfrey S.A.C."/>
            <person name="Knight C.G."/>
            <person name="Malone J.G."/>
            <person name="Robinson Z."/>
            <person name="Spiers A.J."/>
            <person name="Harris S."/>
            <person name="Challis G.L."/>
            <person name="Yaxley A.M."/>
            <person name="Harris D."/>
            <person name="Seeger K."/>
            <person name="Murphy L."/>
            <person name="Rutter S."/>
            <person name="Squares R."/>
            <person name="Quail M.A."/>
            <person name="Saunders E."/>
            <person name="Mavromatis K."/>
            <person name="Brettin T.S."/>
            <person name="Bentley S.D."/>
            <person name="Hothersall J."/>
            <person name="Stephens E."/>
            <person name="Thomas C.M."/>
            <person name="Parkhill J."/>
            <person name="Levy S.B."/>
            <person name="Rainey P.B."/>
            <person name="Thomson N.R."/>
        </authorList>
    </citation>
    <scope>NUCLEOTIDE SEQUENCE [LARGE SCALE GENOMIC DNA]</scope>
    <source>
        <strain>Pf0-1</strain>
    </source>
</reference>
<name>LIPA_PSEPF</name>
<keyword id="KW-0004">4Fe-4S</keyword>
<keyword id="KW-0963">Cytoplasm</keyword>
<keyword id="KW-0408">Iron</keyword>
<keyword id="KW-0411">Iron-sulfur</keyword>
<keyword id="KW-0479">Metal-binding</keyword>
<keyword id="KW-0949">S-adenosyl-L-methionine</keyword>
<keyword id="KW-0808">Transferase</keyword>
<sequence>MTTDAVQTMIPTLDVTERPAPRPKVEAGVKLRGAEKVARIPVKIIPTTELPKKPDWIRVRIPVSPEVDRIKSLLRKHKLHSVCEEASCPNLGECFSGGTATFMIMGDICTRRCPFCDVGHGRPKPLDVNEPESLAIAIADLKLKYVVITSVDRDDLRDGGAQHFADCIREIRKLSPNVQLETLVPDYRGRMDIALEITAAEPPDVFNHNLETVPRLYKAARPGSDYQWSLTLLQRFKQMMPHIPTKSGLMLGLGETDDEVIEVMKRMREHDIDMLTLGQYLQPSRSHLPVQRFVHPDTFAWFAEEGYKMGFKNVASGPLVRSSYHADEQAKLVKAELLGS</sequence>
<feature type="chain" id="PRO_0000325289" description="Lipoyl synthase">
    <location>
        <begin position="1"/>
        <end position="340"/>
    </location>
</feature>
<feature type="domain" description="Radical SAM core" evidence="2">
    <location>
        <begin position="95"/>
        <end position="312"/>
    </location>
</feature>
<feature type="binding site" evidence="1">
    <location>
        <position position="83"/>
    </location>
    <ligand>
        <name>[4Fe-4S] cluster</name>
        <dbReference type="ChEBI" id="CHEBI:49883"/>
        <label>1</label>
    </ligand>
</feature>
<feature type="binding site" evidence="1">
    <location>
        <position position="88"/>
    </location>
    <ligand>
        <name>[4Fe-4S] cluster</name>
        <dbReference type="ChEBI" id="CHEBI:49883"/>
        <label>1</label>
    </ligand>
</feature>
<feature type="binding site" evidence="1">
    <location>
        <position position="94"/>
    </location>
    <ligand>
        <name>[4Fe-4S] cluster</name>
        <dbReference type="ChEBI" id="CHEBI:49883"/>
        <label>1</label>
    </ligand>
</feature>
<feature type="binding site" evidence="1">
    <location>
        <position position="109"/>
    </location>
    <ligand>
        <name>[4Fe-4S] cluster</name>
        <dbReference type="ChEBI" id="CHEBI:49883"/>
        <label>2</label>
        <note>4Fe-4S-S-AdoMet</note>
    </ligand>
</feature>
<feature type="binding site" evidence="1">
    <location>
        <position position="113"/>
    </location>
    <ligand>
        <name>[4Fe-4S] cluster</name>
        <dbReference type="ChEBI" id="CHEBI:49883"/>
        <label>2</label>
        <note>4Fe-4S-S-AdoMet</note>
    </ligand>
</feature>
<feature type="binding site" evidence="1">
    <location>
        <position position="116"/>
    </location>
    <ligand>
        <name>[4Fe-4S] cluster</name>
        <dbReference type="ChEBI" id="CHEBI:49883"/>
        <label>2</label>
        <note>4Fe-4S-S-AdoMet</note>
    </ligand>
</feature>
<feature type="binding site" evidence="1">
    <location>
        <position position="323"/>
    </location>
    <ligand>
        <name>[4Fe-4S] cluster</name>
        <dbReference type="ChEBI" id="CHEBI:49883"/>
        <label>1</label>
    </ligand>
</feature>
<proteinExistence type="inferred from homology"/>
<dbReference type="EC" id="2.8.1.8" evidence="1"/>
<dbReference type="EMBL" id="CP000094">
    <property type="protein sequence ID" value="ABA76700.1"/>
    <property type="molecule type" value="Genomic_DNA"/>
</dbReference>
<dbReference type="SMR" id="Q3K6A4"/>
<dbReference type="KEGG" id="pfo:Pfl01_4963"/>
<dbReference type="eggNOG" id="COG0320">
    <property type="taxonomic scope" value="Bacteria"/>
</dbReference>
<dbReference type="HOGENOM" id="CLU_033144_2_1_6"/>
<dbReference type="UniPathway" id="UPA00538">
    <property type="reaction ID" value="UER00593"/>
</dbReference>
<dbReference type="Proteomes" id="UP000002704">
    <property type="component" value="Chromosome"/>
</dbReference>
<dbReference type="GO" id="GO:0005737">
    <property type="term" value="C:cytoplasm"/>
    <property type="evidence" value="ECO:0007669"/>
    <property type="project" value="UniProtKB-SubCell"/>
</dbReference>
<dbReference type="GO" id="GO:0051539">
    <property type="term" value="F:4 iron, 4 sulfur cluster binding"/>
    <property type="evidence" value="ECO:0007669"/>
    <property type="project" value="UniProtKB-UniRule"/>
</dbReference>
<dbReference type="GO" id="GO:0016992">
    <property type="term" value="F:lipoate synthase activity"/>
    <property type="evidence" value="ECO:0007669"/>
    <property type="project" value="UniProtKB-UniRule"/>
</dbReference>
<dbReference type="GO" id="GO:0046872">
    <property type="term" value="F:metal ion binding"/>
    <property type="evidence" value="ECO:0007669"/>
    <property type="project" value="UniProtKB-KW"/>
</dbReference>
<dbReference type="CDD" id="cd01335">
    <property type="entry name" value="Radical_SAM"/>
    <property type="match status" value="1"/>
</dbReference>
<dbReference type="FunFam" id="3.20.20.70:FF:000023">
    <property type="entry name" value="Lipoyl synthase"/>
    <property type="match status" value="1"/>
</dbReference>
<dbReference type="Gene3D" id="3.20.20.70">
    <property type="entry name" value="Aldolase class I"/>
    <property type="match status" value="1"/>
</dbReference>
<dbReference type="HAMAP" id="MF_00206">
    <property type="entry name" value="Lipoyl_synth"/>
    <property type="match status" value="1"/>
</dbReference>
<dbReference type="InterPro" id="IPR013785">
    <property type="entry name" value="Aldolase_TIM"/>
</dbReference>
<dbReference type="InterPro" id="IPR006638">
    <property type="entry name" value="Elp3/MiaA/NifB-like_rSAM"/>
</dbReference>
<dbReference type="InterPro" id="IPR031691">
    <property type="entry name" value="LIAS_N"/>
</dbReference>
<dbReference type="InterPro" id="IPR003698">
    <property type="entry name" value="Lipoyl_synth"/>
</dbReference>
<dbReference type="InterPro" id="IPR007197">
    <property type="entry name" value="rSAM"/>
</dbReference>
<dbReference type="NCBIfam" id="TIGR00510">
    <property type="entry name" value="lipA"/>
    <property type="match status" value="1"/>
</dbReference>
<dbReference type="NCBIfam" id="NF004019">
    <property type="entry name" value="PRK05481.1"/>
    <property type="match status" value="1"/>
</dbReference>
<dbReference type="NCBIfam" id="NF009544">
    <property type="entry name" value="PRK12928.1"/>
    <property type="match status" value="1"/>
</dbReference>
<dbReference type="PANTHER" id="PTHR10949">
    <property type="entry name" value="LIPOYL SYNTHASE"/>
    <property type="match status" value="1"/>
</dbReference>
<dbReference type="PANTHER" id="PTHR10949:SF0">
    <property type="entry name" value="LIPOYL SYNTHASE, MITOCHONDRIAL"/>
    <property type="match status" value="1"/>
</dbReference>
<dbReference type="Pfam" id="PF16881">
    <property type="entry name" value="LIAS_N"/>
    <property type="match status" value="1"/>
</dbReference>
<dbReference type="Pfam" id="PF04055">
    <property type="entry name" value="Radical_SAM"/>
    <property type="match status" value="1"/>
</dbReference>
<dbReference type="PIRSF" id="PIRSF005963">
    <property type="entry name" value="Lipoyl_synth"/>
    <property type="match status" value="1"/>
</dbReference>
<dbReference type="SFLD" id="SFLDF00271">
    <property type="entry name" value="lipoyl_synthase"/>
    <property type="match status" value="1"/>
</dbReference>
<dbReference type="SFLD" id="SFLDS00029">
    <property type="entry name" value="Radical_SAM"/>
    <property type="match status" value="1"/>
</dbReference>
<dbReference type="SMART" id="SM00729">
    <property type="entry name" value="Elp3"/>
    <property type="match status" value="1"/>
</dbReference>
<dbReference type="SUPFAM" id="SSF102114">
    <property type="entry name" value="Radical SAM enzymes"/>
    <property type="match status" value="1"/>
</dbReference>
<dbReference type="PROSITE" id="PS51918">
    <property type="entry name" value="RADICAL_SAM"/>
    <property type="match status" value="1"/>
</dbReference>
<organism>
    <name type="scientific">Pseudomonas fluorescens (strain Pf0-1)</name>
    <dbReference type="NCBI Taxonomy" id="205922"/>
    <lineage>
        <taxon>Bacteria</taxon>
        <taxon>Pseudomonadati</taxon>
        <taxon>Pseudomonadota</taxon>
        <taxon>Gammaproteobacteria</taxon>
        <taxon>Pseudomonadales</taxon>
        <taxon>Pseudomonadaceae</taxon>
        <taxon>Pseudomonas</taxon>
    </lineage>
</organism>
<protein>
    <recommendedName>
        <fullName evidence="1">Lipoyl synthase</fullName>
        <ecNumber evidence="1">2.8.1.8</ecNumber>
    </recommendedName>
    <alternativeName>
        <fullName evidence="1">Lip-syn</fullName>
        <shortName evidence="1">LS</shortName>
    </alternativeName>
    <alternativeName>
        <fullName evidence="1">Lipoate synthase</fullName>
    </alternativeName>
    <alternativeName>
        <fullName evidence="1">Lipoic acid synthase</fullName>
    </alternativeName>
    <alternativeName>
        <fullName evidence="1">Sulfur insertion protein LipA</fullName>
    </alternativeName>
</protein>
<gene>
    <name evidence="1" type="primary">lipA</name>
    <name type="ordered locus">Pfl01_4963</name>
</gene>
<accession>Q3K6A4</accession>
<comment type="function">
    <text evidence="1">Catalyzes the radical-mediated insertion of two sulfur atoms into the C-6 and C-8 positions of the octanoyl moiety bound to the lipoyl domains of lipoate-dependent enzymes, thereby converting the octanoylated domains into lipoylated derivatives.</text>
</comment>
<comment type="catalytic activity">
    <reaction evidence="1">
        <text>[[Fe-S] cluster scaffold protein carrying a second [4Fe-4S](2+) cluster] + N(6)-octanoyl-L-lysyl-[protein] + 2 oxidized [2Fe-2S]-[ferredoxin] + 2 S-adenosyl-L-methionine + 4 H(+) = [[Fe-S] cluster scaffold protein] + N(6)-[(R)-dihydrolipoyl]-L-lysyl-[protein] + 4 Fe(3+) + 2 hydrogen sulfide + 2 5'-deoxyadenosine + 2 L-methionine + 2 reduced [2Fe-2S]-[ferredoxin]</text>
        <dbReference type="Rhea" id="RHEA:16585"/>
        <dbReference type="Rhea" id="RHEA-COMP:9928"/>
        <dbReference type="Rhea" id="RHEA-COMP:10000"/>
        <dbReference type="Rhea" id="RHEA-COMP:10001"/>
        <dbReference type="Rhea" id="RHEA-COMP:10475"/>
        <dbReference type="Rhea" id="RHEA-COMP:14568"/>
        <dbReference type="Rhea" id="RHEA-COMP:14569"/>
        <dbReference type="ChEBI" id="CHEBI:15378"/>
        <dbReference type="ChEBI" id="CHEBI:17319"/>
        <dbReference type="ChEBI" id="CHEBI:29034"/>
        <dbReference type="ChEBI" id="CHEBI:29919"/>
        <dbReference type="ChEBI" id="CHEBI:33722"/>
        <dbReference type="ChEBI" id="CHEBI:33737"/>
        <dbReference type="ChEBI" id="CHEBI:33738"/>
        <dbReference type="ChEBI" id="CHEBI:57844"/>
        <dbReference type="ChEBI" id="CHEBI:59789"/>
        <dbReference type="ChEBI" id="CHEBI:78809"/>
        <dbReference type="ChEBI" id="CHEBI:83100"/>
        <dbReference type="EC" id="2.8.1.8"/>
    </reaction>
</comment>
<comment type="cofactor">
    <cofactor evidence="1">
        <name>[4Fe-4S] cluster</name>
        <dbReference type="ChEBI" id="CHEBI:49883"/>
    </cofactor>
    <text evidence="1">Binds 2 [4Fe-4S] clusters per subunit. One cluster is coordinated with 3 cysteines and an exchangeable S-adenosyl-L-methionine.</text>
</comment>
<comment type="pathway">
    <text evidence="1">Protein modification; protein lipoylation via endogenous pathway; protein N(6)-(lipoyl)lysine from octanoyl-[acyl-carrier-protein]: step 2/2.</text>
</comment>
<comment type="subcellular location">
    <subcellularLocation>
        <location evidence="1">Cytoplasm</location>
    </subcellularLocation>
</comment>
<comment type="similarity">
    <text evidence="1">Belongs to the radical SAM superfamily. Lipoyl synthase family.</text>
</comment>
<evidence type="ECO:0000255" key="1">
    <source>
        <dbReference type="HAMAP-Rule" id="MF_00206"/>
    </source>
</evidence>
<evidence type="ECO:0000255" key="2">
    <source>
        <dbReference type="PROSITE-ProRule" id="PRU01266"/>
    </source>
</evidence>